<dbReference type="EC" id="3.1.21.3" evidence="2"/>
<dbReference type="EMBL" id="AP008934">
    <property type="protein sequence ID" value="BAE17199.1"/>
    <property type="molecule type" value="Genomic_DNA"/>
</dbReference>
<dbReference type="RefSeq" id="WP_002511775.1">
    <property type="nucleotide sequence ID" value="NZ_MTGA01000037.1"/>
</dbReference>
<dbReference type="SMR" id="Q4A127"/>
<dbReference type="REBASE" id="11264">
    <property type="entry name" value="SsaAORF53P"/>
</dbReference>
<dbReference type="GeneID" id="3617259"/>
<dbReference type="KEGG" id="ssp:SSP0054"/>
<dbReference type="PATRIC" id="fig|342451.11.peg.54"/>
<dbReference type="eggNOG" id="COG0610">
    <property type="taxonomic scope" value="Bacteria"/>
</dbReference>
<dbReference type="HOGENOM" id="CLU_004848_1_0_9"/>
<dbReference type="OrthoDB" id="9758243at2"/>
<dbReference type="PRO" id="PR:Q4A127"/>
<dbReference type="Proteomes" id="UP000006371">
    <property type="component" value="Chromosome"/>
</dbReference>
<dbReference type="GO" id="GO:0005524">
    <property type="term" value="F:ATP binding"/>
    <property type="evidence" value="ECO:0007669"/>
    <property type="project" value="UniProtKB-KW"/>
</dbReference>
<dbReference type="GO" id="GO:0003677">
    <property type="term" value="F:DNA binding"/>
    <property type="evidence" value="ECO:0007669"/>
    <property type="project" value="UniProtKB-KW"/>
</dbReference>
<dbReference type="GO" id="GO:0009035">
    <property type="term" value="F:type I site-specific deoxyribonuclease activity"/>
    <property type="evidence" value="ECO:0007669"/>
    <property type="project" value="UniProtKB-EC"/>
</dbReference>
<dbReference type="GO" id="GO:0009307">
    <property type="term" value="P:DNA restriction-modification system"/>
    <property type="evidence" value="ECO:0007669"/>
    <property type="project" value="UniProtKB-KW"/>
</dbReference>
<dbReference type="CDD" id="cd18030">
    <property type="entry name" value="DEXHc_RE_I_HsdR"/>
    <property type="match status" value="1"/>
</dbReference>
<dbReference type="CDD" id="cd22332">
    <property type="entry name" value="HsdR_N"/>
    <property type="match status" value="1"/>
</dbReference>
<dbReference type="CDD" id="cd18800">
    <property type="entry name" value="SF2_C_EcoR124I-like"/>
    <property type="match status" value="1"/>
</dbReference>
<dbReference type="Gene3D" id="1.20.58.2040">
    <property type="match status" value="1"/>
</dbReference>
<dbReference type="Gene3D" id="3.90.1570.50">
    <property type="match status" value="1"/>
</dbReference>
<dbReference type="Gene3D" id="3.40.50.300">
    <property type="entry name" value="P-loop containing nucleotide triphosphate hydrolases"/>
    <property type="match status" value="2"/>
</dbReference>
<dbReference type="InterPro" id="IPR014001">
    <property type="entry name" value="Helicase_ATP-bd"/>
</dbReference>
<dbReference type="InterPro" id="IPR055180">
    <property type="entry name" value="HsdR_RecA-like_helicase_dom_2"/>
</dbReference>
<dbReference type="InterPro" id="IPR027417">
    <property type="entry name" value="P-loop_NTPase"/>
</dbReference>
<dbReference type="InterPro" id="IPR007409">
    <property type="entry name" value="Restrct_endonuc_type1_HsdR_N"/>
</dbReference>
<dbReference type="InterPro" id="IPR004473">
    <property type="entry name" value="Restrct_endonuc_typeI_HsdR"/>
</dbReference>
<dbReference type="InterPro" id="IPR040980">
    <property type="entry name" value="SWI2_SNF2"/>
</dbReference>
<dbReference type="InterPro" id="IPR051268">
    <property type="entry name" value="Type-I_R_enzyme_R_subunit"/>
</dbReference>
<dbReference type="InterPro" id="IPR022625">
    <property type="entry name" value="TypeI_RM_Rsu_C"/>
</dbReference>
<dbReference type="NCBIfam" id="TIGR00348">
    <property type="entry name" value="hsdR"/>
    <property type="match status" value="1"/>
</dbReference>
<dbReference type="PANTHER" id="PTHR30195:SF16">
    <property type="entry name" value="TYPE I RESTRICTION ENZYME ENDONUCLEASE SUBUNIT"/>
    <property type="match status" value="1"/>
</dbReference>
<dbReference type="PANTHER" id="PTHR30195">
    <property type="entry name" value="TYPE I SITE-SPECIFIC DEOXYRIBONUCLEASE PROTEIN SUBUNIT M AND R"/>
    <property type="match status" value="1"/>
</dbReference>
<dbReference type="Pfam" id="PF12008">
    <property type="entry name" value="EcoR124_C"/>
    <property type="match status" value="1"/>
</dbReference>
<dbReference type="Pfam" id="PF04313">
    <property type="entry name" value="HSDR_N"/>
    <property type="match status" value="1"/>
</dbReference>
<dbReference type="Pfam" id="PF18766">
    <property type="entry name" value="SWI2_SNF2"/>
    <property type="match status" value="1"/>
</dbReference>
<dbReference type="Pfam" id="PF22679">
    <property type="entry name" value="T1R_D3-like"/>
    <property type="match status" value="1"/>
</dbReference>
<dbReference type="SMART" id="SM00487">
    <property type="entry name" value="DEXDc"/>
    <property type="match status" value="1"/>
</dbReference>
<dbReference type="SUPFAM" id="SSF52540">
    <property type="entry name" value="P-loop containing nucleoside triphosphate hydrolases"/>
    <property type="match status" value="1"/>
</dbReference>
<dbReference type="PROSITE" id="PS51192">
    <property type="entry name" value="HELICASE_ATP_BIND_1"/>
    <property type="match status" value="1"/>
</dbReference>
<protein>
    <recommendedName>
        <fullName evidence="4">Type I restriction enzyme SsaAORF53P endonuclease subunit</fullName>
        <shortName>R protein</shortName>
        <shortName evidence="4">SsaAORF53P</shortName>
        <ecNumber evidence="2">3.1.21.3</ecNumber>
    </recommendedName>
    <alternativeName>
        <fullName>Type-1 restriction enzyme R protein</fullName>
    </alternativeName>
</protein>
<proteinExistence type="inferred from homology"/>
<reference key="1">
    <citation type="journal article" date="2005" name="Proc. Natl. Acad. Sci. U.S.A.">
        <title>Whole genome sequence of Staphylococcus saprophyticus reveals the pathogenesis of uncomplicated urinary tract infection.</title>
        <authorList>
            <person name="Kuroda M."/>
            <person name="Yamashita A."/>
            <person name="Hirakawa H."/>
            <person name="Kumano M."/>
            <person name="Morikawa K."/>
            <person name="Higashide M."/>
            <person name="Maruyama A."/>
            <person name="Inose Y."/>
            <person name="Matoba K."/>
            <person name="Toh H."/>
            <person name="Kuhara S."/>
            <person name="Hattori M."/>
            <person name="Ohta T."/>
        </authorList>
    </citation>
    <scope>NUCLEOTIDE SEQUENCE [LARGE SCALE GENOMIC DNA]</scope>
    <source>
        <strain>ATCC 15305 / DSM 20229 / NCIMB 8711 / NCTC 7292 / S-41</strain>
    </source>
</reference>
<reference key="2">
    <citation type="journal article" date="2003" name="Nucleic Acids Res.">
        <title>A nomenclature for restriction enzymes, DNA methyltransferases, homing endonucleases and their genes.</title>
        <authorList>
            <person name="Roberts R.J."/>
            <person name="Belfort M."/>
            <person name="Bestor T."/>
            <person name="Bhagwat A.S."/>
            <person name="Bickle T.A."/>
            <person name="Bitinaite J."/>
            <person name="Blumenthal R.M."/>
            <person name="Degtyarev S.K."/>
            <person name="Dryden D.T."/>
            <person name="Dybvig K."/>
            <person name="Firman K."/>
            <person name="Gromova E.S."/>
            <person name="Gumport R.I."/>
            <person name="Halford S.E."/>
            <person name="Hattman S."/>
            <person name="Heitman J."/>
            <person name="Hornby D.P."/>
            <person name="Janulaitis A."/>
            <person name="Jeltsch A."/>
            <person name="Josephsen J."/>
            <person name="Kiss A."/>
            <person name="Klaenhammer T.R."/>
            <person name="Kobayashi I."/>
            <person name="Kong H."/>
            <person name="Krueger D.H."/>
            <person name="Lacks S."/>
            <person name="Marinus M.G."/>
            <person name="Miyahara M."/>
            <person name="Morgan R.D."/>
            <person name="Murray N.E."/>
            <person name="Nagaraja V."/>
            <person name="Piekarowicz A."/>
            <person name="Pingoud A."/>
            <person name="Raleigh E."/>
            <person name="Rao D.N."/>
            <person name="Reich N."/>
            <person name="Repin V.E."/>
            <person name="Selker E.U."/>
            <person name="Shaw P.C."/>
            <person name="Stein D.C."/>
            <person name="Stoddard B.L."/>
            <person name="Szybalski W."/>
            <person name="Trautner T.A."/>
            <person name="Van Etten J.L."/>
            <person name="Vitor J.M."/>
            <person name="Wilson G.G."/>
            <person name="Xu S.Y."/>
        </authorList>
    </citation>
    <scope>NOMENCLATURE</scope>
</reference>
<name>HSDR_STAS1</name>
<comment type="function">
    <text evidence="2 4">The restriction (R) subunit of a type I restriction enzyme that recognizes an undetermined sequence and cleaves a random distance away. Subunit R is required for both nuclease and ATPase activities, but not for modification. After locating a non-methylated recognition site, the enzyme complex serves as a molecular motor that translocates DNA in an ATP-dependent manner until a collision occurs that triggers cleavage.</text>
</comment>
<comment type="catalytic activity">
    <reaction evidence="2">
        <text>Endonucleolytic cleavage of DNA to give random double-stranded fragments with terminal 5'-phosphates, ATP is simultaneously hydrolyzed.</text>
        <dbReference type="EC" id="3.1.21.3"/>
    </reaction>
</comment>
<comment type="subunit">
    <text evidence="1 2">The type I restriction/modification system is composed of three polypeptides R, M and S.</text>
</comment>
<comment type="miscellaneous">
    <text evidence="2">Type I restriction and modification enzymes are complex, multifunctional systems which require ATP, S-adenosyl methionine and magnesium as cofactors and, in addition to their endonucleolytic and methylase activities, are potent DNA-dependent ATPases.</text>
</comment>
<comment type="similarity">
    <text evidence="5">Belongs to the HsdR family.</text>
</comment>
<feature type="chain" id="PRO_0000077272" description="Type I restriction enzyme SsaAORF53P endonuclease subunit">
    <location>
        <begin position="1"/>
        <end position="930"/>
    </location>
</feature>
<feature type="domain" description="Helicase ATP-binding" evidence="3">
    <location>
        <begin position="254"/>
        <end position="418"/>
    </location>
</feature>
<feature type="binding site" evidence="3">
    <location>
        <begin position="268"/>
        <end position="274"/>
    </location>
    <ligand>
        <name>ATP</name>
        <dbReference type="ChEBI" id="CHEBI:30616"/>
    </ligand>
</feature>
<sequence>MVYQSEFALETEMMEQLKSNGYETVTIRNEQQLLDNFRSILNERHADKLNGDPLTDKEFQRLLTMINGKGIFESARILRDKMPLKRDDESEVYLSFLDTRHWCQNKFQITNQVSVDDTYKARYDVTILINGLPLVQIELKRRGIDINEAFNQVMRYRKQNYTGLFRYIQLFIISNGIDTRYISNNDGEIYKSHMFYWSDKENNRINTLNEFTETFLRPCHIAKMISRYMILNETDNILMAMRPYQVHAVEALIHQATETSNNGYIWHTTGSGKTLTSFKASQVLSEQDDIKKVIFLVDRKDLDSQTEEEFNKFSKGSVDKTNNTAQLVKQLKDKSLPLIVTTIQKMSKAIQNNAEALDQYKTDKVVFIIDECHRSQFGDMHRIVRQHFNNAQYFGFTGTPRFEENQSQDGRSTADIFGRCLHTYLIKDAIHDGNVLGFSVDYINTIKAQNIDTETDELVEGINTDEVWLSDQRVELIARHITENHDKYTRNRQYSAIFTVQSIPALVKYYDAFKKISKDYEHPLKVAGVFSYAANEERNEGEVDEAHSRGKLEEVIQDYNLNFGTNFSTDTFQEYFNHISKNVKKGVKDNKIDVLIVVNMFLTGFDSKVLNTLYVDKNLKYHDLIQAYSRTNRVEKETKPFGKIVNYRDLKQNTDNALKLFSQTEDTDRVLMRDYDEYKAEFVDALAELKAVALKPQDMDQVQDENEKKAFVEAFRLVSKLVLRLKAFDEFDFTKANIGMNEQEFEDYKSKYFAIYDEVKPKRGEVEKVSILNDIDFEIEILRNDRINVSYIMDLVRQIDLKDKAEQQRNRDQIRRMLDNADDPTLRLKRDLLREFIDDVIPELSEEDNIDEAYILFENAKRESEFNQFAQQQAVDEQVLKDITGEYEYSGIVNQDHLKELVGDKKLREKRQTKKAVTSFVEEVSEKYSS</sequence>
<gene>
    <name evidence="5" type="primary">hsdR</name>
    <name type="ordered locus">SSP0054</name>
</gene>
<accession>Q4A127</accession>
<organism>
    <name type="scientific">Staphylococcus saprophyticus subsp. saprophyticus (strain ATCC 15305 / DSM 20229 / NCIMB 8711 / NCTC 7292 / S-41)</name>
    <dbReference type="NCBI Taxonomy" id="342451"/>
    <lineage>
        <taxon>Bacteria</taxon>
        <taxon>Bacillati</taxon>
        <taxon>Bacillota</taxon>
        <taxon>Bacilli</taxon>
        <taxon>Bacillales</taxon>
        <taxon>Staphylococcaceae</taxon>
        <taxon>Staphylococcus</taxon>
    </lineage>
</organism>
<keyword id="KW-0067">ATP-binding</keyword>
<keyword id="KW-0238">DNA-binding</keyword>
<keyword id="KW-0255">Endonuclease</keyword>
<keyword id="KW-0378">Hydrolase</keyword>
<keyword id="KW-0540">Nuclease</keyword>
<keyword id="KW-0547">Nucleotide-binding</keyword>
<keyword id="KW-1185">Reference proteome</keyword>
<keyword id="KW-0680">Restriction system</keyword>
<evidence type="ECO:0000250" key="1"/>
<evidence type="ECO:0000250" key="2">
    <source>
        <dbReference type="UniProtKB" id="P08956"/>
    </source>
</evidence>
<evidence type="ECO:0000255" key="3">
    <source>
        <dbReference type="PROSITE-ProRule" id="PRU00541"/>
    </source>
</evidence>
<evidence type="ECO:0000303" key="4">
    <source>
    </source>
</evidence>
<evidence type="ECO:0000305" key="5"/>